<protein>
    <recommendedName>
        <fullName evidence="1">GTPase Der</fullName>
    </recommendedName>
    <alternativeName>
        <fullName evidence="1">GTP-binding protein EngA</fullName>
    </alternativeName>
</protein>
<evidence type="ECO:0000255" key="1">
    <source>
        <dbReference type="HAMAP-Rule" id="MF_00195"/>
    </source>
</evidence>
<proteinExistence type="inferred from homology"/>
<organism>
    <name type="scientific">Azorhizobium caulinodans (strain ATCC 43989 / DSM 5975 / JCM 20966 / LMG 6465 / NBRC 14845 / NCIMB 13405 / ORS 571)</name>
    <dbReference type="NCBI Taxonomy" id="438753"/>
    <lineage>
        <taxon>Bacteria</taxon>
        <taxon>Pseudomonadati</taxon>
        <taxon>Pseudomonadota</taxon>
        <taxon>Alphaproteobacteria</taxon>
        <taxon>Hyphomicrobiales</taxon>
        <taxon>Xanthobacteraceae</taxon>
        <taxon>Azorhizobium</taxon>
    </lineage>
</organism>
<accession>A8HVL5</accession>
<dbReference type="EMBL" id="AP009384">
    <property type="protein sequence ID" value="BAF90326.1"/>
    <property type="molecule type" value="Genomic_DNA"/>
</dbReference>
<dbReference type="RefSeq" id="WP_012172848.1">
    <property type="nucleotide sequence ID" value="NC_009937.1"/>
</dbReference>
<dbReference type="SMR" id="A8HVL5"/>
<dbReference type="STRING" id="438753.AZC_4328"/>
<dbReference type="KEGG" id="azc:AZC_4328"/>
<dbReference type="eggNOG" id="COG1160">
    <property type="taxonomic scope" value="Bacteria"/>
</dbReference>
<dbReference type="HOGENOM" id="CLU_016077_5_0_5"/>
<dbReference type="Proteomes" id="UP000000270">
    <property type="component" value="Chromosome"/>
</dbReference>
<dbReference type="GO" id="GO:0005525">
    <property type="term" value="F:GTP binding"/>
    <property type="evidence" value="ECO:0007669"/>
    <property type="project" value="UniProtKB-UniRule"/>
</dbReference>
<dbReference type="GO" id="GO:0042254">
    <property type="term" value="P:ribosome biogenesis"/>
    <property type="evidence" value="ECO:0007669"/>
    <property type="project" value="UniProtKB-KW"/>
</dbReference>
<dbReference type="CDD" id="cd01894">
    <property type="entry name" value="EngA1"/>
    <property type="match status" value="1"/>
</dbReference>
<dbReference type="CDD" id="cd01895">
    <property type="entry name" value="EngA2"/>
    <property type="match status" value="1"/>
</dbReference>
<dbReference type="FunFam" id="3.30.300.20:FF:000004">
    <property type="entry name" value="GTPase Der"/>
    <property type="match status" value="1"/>
</dbReference>
<dbReference type="FunFam" id="3.40.50.300:FF:000057">
    <property type="entry name" value="GTPase Der"/>
    <property type="match status" value="1"/>
</dbReference>
<dbReference type="Gene3D" id="3.30.300.20">
    <property type="match status" value="1"/>
</dbReference>
<dbReference type="Gene3D" id="3.40.50.300">
    <property type="entry name" value="P-loop containing nucleotide triphosphate hydrolases"/>
    <property type="match status" value="2"/>
</dbReference>
<dbReference type="HAMAP" id="MF_00195">
    <property type="entry name" value="GTPase_Der"/>
    <property type="match status" value="1"/>
</dbReference>
<dbReference type="InterPro" id="IPR031166">
    <property type="entry name" value="G_ENGA"/>
</dbReference>
<dbReference type="InterPro" id="IPR006073">
    <property type="entry name" value="GTP-bd"/>
</dbReference>
<dbReference type="InterPro" id="IPR016484">
    <property type="entry name" value="GTPase_Der"/>
</dbReference>
<dbReference type="InterPro" id="IPR032859">
    <property type="entry name" value="KH_dom-like"/>
</dbReference>
<dbReference type="InterPro" id="IPR015946">
    <property type="entry name" value="KH_dom-like_a/b"/>
</dbReference>
<dbReference type="InterPro" id="IPR027417">
    <property type="entry name" value="P-loop_NTPase"/>
</dbReference>
<dbReference type="InterPro" id="IPR005225">
    <property type="entry name" value="Small_GTP-bd"/>
</dbReference>
<dbReference type="NCBIfam" id="TIGR03594">
    <property type="entry name" value="GTPase_EngA"/>
    <property type="match status" value="1"/>
</dbReference>
<dbReference type="NCBIfam" id="TIGR00231">
    <property type="entry name" value="small_GTP"/>
    <property type="match status" value="2"/>
</dbReference>
<dbReference type="PANTHER" id="PTHR43834">
    <property type="entry name" value="GTPASE DER"/>
    <property type="match status" value="1"/>
</dbReference>
<dbReference type="PANTHER" id="PTHR43834:SF6">
    <property type="entry name" value="GTPASE DER"/>
    <property type="match status" value="1"/>
</dbReference>
<dbReference type="Pfam" id="PF14714">
    <property type="entry name" value="KH_dom-like"/>
    <property type="match status" value="1"/>
</dbReference>
<dbReference type="Pfam" id="PF01926">
    <property type="entry name" value="MMR_HSR1"/>
    <property type="match status" value="2"/>
</dbReference>
<dbReference type="PIRSF" id="PIRSF006485">
    <property type="entry name" value="GTP-binding_EngA"/>
    <property type="match status" value="1"/>
</dbReference>
<dbReference type="PRINTS" id="PR00326">
    <property type="entry name" value="GTP1OBG"/>
</dbReference>
<dbReference type="SUPFAM" id="SSF52540">
    <property type="entry name" value="P-loop containing nucleoside triphosphate hydrolases"/>
    <property type="match status" value="2"/>
</dbReference>
<dbReference type="PROSITE" id="PS51712">
    <property type="entry name" value="G_ENGA"/>
    <property type="match status" value="2"/>
</dbReference>
<name>DER_AZOC5</name>
<sequence length="453" mass="49303">MSFTLAIVGRPNVGKSTLFNRLVGKRLALVDDRPGVTRDRREGDARLGDLAFRIVDTAGLEEADADSLEGRMRAQTETAIGDADALLFLIDARVGLTPTDRAFASLARRSGKPTILVANKSEGRGGEAGAMEAYELGLGAPVPLSAEHGEGLSDLYDAICEALPAQTAPQEEDEETEEAEANPNRPIKVAVIGRPNAGKSTLINRLLGEDRLLTGPEAGITRDSISVEVTWNGRALEVFDTAGLRKRARIEDKLEKLSAADALRAMKFAEVVVVLMDATKPFEEQDLRIADLVVREGRALVLGYNKSDLVGPAAFSRLREEADHWLPQVKGVPIVPLSGLTGRGLDKLVEAIAATYAVWNTRIPTNPLNRYLQEATDSHPPPAVSGRRVKIRYMTQPKARPPSFVLFCSRPEALPESYLRYITNGLREAFSLPGVPIRLTLREKGNPYADKDK</sequence>
<gene>
    <name evidence="1" type="primary">der</name>
    <name type="synonym">engA</name>
    <name type="ordered locus">AZC_4328</name>
</gene>
<reference key="1">
    <citation type="submission" date="2007-04" db="EMBL/GenBank/DDBJ databases">
        <title>Complete genome sequence of the nitrogen-fixing bacterium Azorhizobium caulinodans ORS571.</title>
        <authorList>
            <person name="Lee K.B."/>
            <person name="Backer P.D."/>
            <person name="Aono T."/>
            <person name="Liu C.T."/>
            <person name="Suzuki S."/>
            <person name="Suzuki T."/>
            <person name="Kaneko T."/>
            <person name="Yamada M."/>
            <person name="Tabata S."/>
            <person name="Kupfer D.M."/>
            <person name="Najar F.Z."/>
            <person name="Wiley G.B."/>
            <person name="Roe B."/>
            <person name="Binnewies T."/>
            <person name="Ussery D."/>
            <person name="Vereecke D."/>
            <person name="Gevers D."/>
            <person name="Holsters M."/>
            <person name="Oyaizu H."/>
        </authorList>
    </citation>
    <scope>NUCLEOTIDE SEQUENCE [LARGE SCALE GENOMIC DNA]</scope>
    <source>
        <strain>ATCC 43989 / DSM 5975 / JCM 20966 / LMG 6465 / NBRC 14845 / NCIMB 13405 / ORS 571</strain>
    </source>
</reference>
<keyword id="KW-0342">GTP-binding</keyword>
<keyword id="KW-0547">Nucleotide-binding</keyword>
<keyword id="KW-1185">Reference proteome</keyword>
<keyword id="KW-0677">Repeat</keyword>
<keyword id="KW-0690">Ribosome biogenesis</keyword>
<comment type="function">
    <text evidence="1">GTPase that plays an essential role in the late steps of ribosome biogenesis.</text>
</comment>
<comment type="subunit">
    <text evidence="1">Associates with the 50S ribosomal subunit.</text>
</comment>
<comment type="similarity">
    <text evidence="1">Belongs to the TRAFAC class TrmE-Era-EngA-EngB-Septin-like GTPase superfamily. EngA (Der) GTPase family.</text>
</comment>
<feature type="chain" id="PRO_1000071700" description="GTPase Der">
    <location>
        <begin position="1"/>
        <end position="453"/>
    </location>
</feature>
<feature type="domain" description="EngA-type G 1">
    <location>
        <begin position="3"/>
        <end position="167"/>
    </location>
</feature>
<feature type="domain" description="EngA-type G 2">
    <location>
        <begin position="187"/>
        <end position="360"/>
    </location>
</feature>
<feature type="domain" description="KH-like" evidence="1">
    <location>
        <begin position="361"/>
        <end position="445"/>
    </location>
</feature>
<feature type="binding site" evidence="1">
    <location>
        <begin position="9"/>
        <end position="16"/>
    </location>
    <ligand>
        <name>GTP</name>
        <dbReference type="ChEBI" id="CHEBI:37565"/>
        <label>1</label>
    </ligand>
</feature>
<feature type="binding site" evidence="1">
    <location>
        <begin position="56"/>
        <end position="60"/>
    </location>
    <ligand>
        <name>GTP</name>
        <dbReference type="ChEBI" id="CHEBI:37565"/>
        <label>1</label>
    </ligand>
</feature>
<feature type="binding site" evidence="1">
    <location>
        <begin position="119"/>
        <end position="122"/>
    </location>
    <ligand>
        <name>GTP</name>
        <dbReference type="ChEBI" id="CHEBI:37565"/>
        <label>1</label>
    </ligand>
</feature>
<feature type="binding site" evidence="1">
    <location>
        <begin position="193"/>
        <end position="200"/>
    </location>
    <ligand>
        <name>GTP</name>
        <dbReference type="ChEBI" id="CHEBI:37565"/>
        <label>2</label>
    </ligand>
</feature>
<feature type="binding site" evidence="1">
    <location>
        <begin position="240"/>
        <end position="244"/>
    </location>
    <ligand>
        <name>GTP</name>
        <dbReference type="ChEBI" id="CHEBI:37565"/>
        <label>2</label>
    </ligand>
</feature>
<feature type="binding site" evidence="1">
    <location>
        <begin position="305"/>
        <end position="308"/>
    </location>
    <ligand>
        <name>GTP</name>
        <dbReference type="ChEBI" id="CHEBI:37565"/>
        <label>2</label>
    </ligand>
</feature>